<keyword id="KW-0131">Cell cycle</keyword>
<keyword id="KW-0132">Cell division</keyword>
<dbReference type="EMBL" id="CP001113">
    <property type="protein sequence ID" value="ACF62257.1"/>
    <property type="molecule type" value="Genomic_DNA"/>
</dbReference>
<dbReference type="RefSeq" id="WP_001185666.1">
    <property type="nucleotide sequence ID" value="NZ_CCMR01000003.1"/>
</dbReference>
<dbReference type="SMR" id="B4SUK9"/>
<dbReference type="GeneID" id="92972923"/>
<dbReference type="KEGG" id="see:SNSL254_A1955"/>
<dbReference type="HOGENOM" id="CLU_137929_2_2_6"/>
<dbReference type="Proteomes" id="UP000008824">
    <property type="component" value="Chromosome"/>
</dbReference>
<dbReference type="GO" id="GO:0051301">
    <property type="term" value="P:cell division"/>
    <property type="evidence" value="ECO:0007669"/>
    <property type="project" value="UniProtKB-KW"/>
</dbReference>
<dbReference type="GO" id="GO:0032955">
    <property type="term" value="P:regulation of division septum assembly"/>
    <property type="evidence" value="ECO:0007669"/>
    <property type="project" value="InterPro"/>
</dbReference>
<dbReference type="FunFam" id="3.30.1070.10:FF:000001">
    <property type="entry name" value="Cell division topological specificity factor"/>
    <property type="match status" value="1"/>
</dbReference>
<dbReference type="Gene3D" id="3.30.1070.10">
    <property type="entry name" value="Cell division topological specificity factor MinE"/>
    <property type="match status" value="1"/>
</dbReference>
<dbReference type="HAMAP" id="MF_00262">
    <property type="entry name" value="MinE"/>
    <property type="match status" value="1"/>
</dbReference>
<dbReference type="InterPro" id="IPR005527">
    <property type="entry name" value="MinE"/>
</dbReference>
<dbReference type="InterPro" id="IPR036707">
    <property type="entry name" value="MinE_sf"/>
</dbReference>
<dbReference type="NCBIfam" id="TIGR01215">
    <property type="entry name" value="minE"/>
    <property type="match status" value="1"/>
</dbReference>
<dbReference type="NCBIfam" id="NF001422">
    <property type="entry name" value="PRK00296.1"/>
    <property type="match status" value="1"/>
</dbReference>
<dbReference type="Pfam" id="PF03776">
    <property type="entry name" value="MinE"/>
    <property type="match status" value="1"/>
</dbReference>
<dbReference type="SUPFAM" id="SSF55229">
    <property type="entry name" value="Cell division protein MinE topological specificity domain"/>
    <property type="match status" value="1"/>
</dbReference>
<protein>
    <recommendedName>
        <fullName evidence="1">Cell division topological specificity factor</fullName>
    </recommendedName>
</protein>
<name>MINE_SALNS</name>
<sequence length="88" mass="10182">MALLDFFLSRKKSTANIAKERLQIIVAERRRSDAEPHYLPQLRKDILEVICKYVQIDPEMVTVQLEQKDGDISILELNVTLPEAEESK</sequence>
<comment type="function">
    <text evidence="1">Prevents the cell division inhibition by proteins MinC and MinD at internal division sites while permitting inhibition at polar sites. This ensures cell division at the proper site by restricting the formation of a division septum at the midpoint of the long axis of the cell.</text>
</comment>
<comment type="similarity">
    <text evidence="1">Belongs to the MinE family.</text>
</comment>
<accession>B4SUK9</accession>
<evidence type="ECO:0000255" key="1">
    <source>
        <dbReference type="HAMAP-Rule" id="MF_00262"/>
    </source>
</evidence>
<reference key="1">
    <citation type="journal article" date="2011" name="J. Bacteriol.">
        <title>Comparative genomics of 28 Salmonella enterica isolates: evidence for CRISPR-mediated adaptive sublineage evolution.</title>
        <authorList>
            <person name="Fricke W.F."/>
            <person name="Mammel M.K."/>
            <person name="McDermott P.F."/>
            <person name="Tartera C."/>
            <person name="White D.G."/>
            <person name="Leclerc J.E."/>
            <person name="Ravel J."/>
            <person name="Cebula T.A."/>
        </authorList>
    </citation>
    <scope>NUCLEOTIDE SEQUENCE [LARGE SCALE GENOMIC DNA]</scope>
    <source>
        <strain>SL254</strain>
    </source>
</reference>
<proteinExistence type="inferred from homology"/>
<feature type="chain" id="PRO_1000114242" description="Cell division topological specificity factor">
    <location>
        <begin position="1"/>
        <end position="88"/>
    </location>
</feature>
<organism>
    <name type="scientific">Salmonella newport (strain SL254)</name>
    <dbReference type="NCBI Taxonomy" id="423368"/>
    <lineage>
        <taxon>Bacteria</taxon>
        <taxon>Pseudomonadati</taxon>
        <taxon>Pseudomonadota</taxon>
        <taxon>Gammaproteobacteria</taxon>
        <taxon>Enterobacterales</taxon>
        <taxon>Enterobacteriaceae</taxon>
        <taxon>Salmonella</taxon>
    </lineage>
</organism>
<gene>
    <name evidence="1" type="primary">minE</name>
    <name type="ordered locus">SNSL254_A1955</name>
</gene>